<protein>
    <recommendedName>
        <fullName>Probable cGMP 3',5'-cyclic phosphodiesterase subunit delta</fullName>
    </recommendedName>
</protein>
<comment type="subunit">
    <text evidence="1">Interacts with Pde6.</text>
</comment>
<comment type="subcellular location">
    <subcellularLocation>
        <location evidence="1">Nucleus</location>
    </subcellularLocation>
    <subcellularLocation>
        <location evidence="1">Cytoplasm</location>
    </subcellularLocation>
</comment>
<comment type="similarity">
    <text evidence="2">Belongs to the PDE6D/unc-119 family.</text>
</comment>
<reference evidence="3" key="1">
    <citation type="journal article" date="2002" name="Science">
        <title>The genome sequence of the malaria mosquito Anopheles gambiae.</title>
        <authorList>
            <person name="Holt R.A."/>
            <person name="Subramanian G.M."/>
            <person name="Halpern A."/>
            <person name="Sutton G.G."/>
            <person name="Charlab R."/>
            <person name="Nusskern D.R."/>
            <person name="Wincker P."/>
            <person name="Clark A.G."/>
            <person name="Ribeiro J.M.C."/>
            <person name="Wides R."/>
            <person name="Salzberg S.L."/>
            <person name="Loftus B.J."/>
            <person name="Yandell M.D."/>
            <person name="Majoros W.H."/>
            <person name="Rusch D.B."/>
            <person name="Lai Z."/>
            <person name="Kraft C.L."/>
            <person name="Abril J.F."/>
            <person name="Anthouard V."/>
            <person name="Arensburger P."/>
            <person name="Atkinson P.W."/>
            <person name="Baden H."/>
            <person name="de Berardinis V."/>
            <person name="Baldwin D."/>
            <person name="Benes V."/>
            <person name="Biedler J."/>
            <person name="Blass C."/>
            <person name="Bolanos R."/>
            <person name="Boscus D."/>
            <person name="Barnstead M."/>
            <person name="Cai S."/>
            <person name="Center A."/>
            <person name="Chaturverdi K."/>
            <person name="Christophides G.K."/>
            <person name="Chrystal M.A.M."/>
            <person name="Clamp M."/>
            <person name="Cravchik A."/>
            <person name="Curwen V."/>
            <person name="Dana A."/>
            <person name="Delcher A."/>
            <person name="Dew I."/>
            <person name="Evans C.A."/>
            <person name="Flanigan M."/>
            <person name="Grundschober-Freimoser A."/>
            <person name="Friedli L."/>
            <person name="Gu Z."/>
            <person name="Guan P."/>
            <person name="Guigo R."/>
            <person name="Hillenmeyer M.E."/>
            <person name="Hladun S.L."/>
            <person name="Hogan J.R."/>
            <person name="Hong Y.S."/>
            <person name="Hoover J."/>
            <person name="Jaillon O."/>
            <person name="Ke Z."/>
            <person name="Kodira C.D."/>
            <person name="Kokoza E."/>
            <person name="Koutsos A."/>
            <person name="Letunic I."/>
            <person name="Levitsky A.A."/>
            <person name="Liang Y."/>
            <person name="Lin J.-J."/>
            <person name="Lobo N.F."/>
            <person name="Lopez J.R."/>
            <person name="Malek J.A."/>
            <person name="McIntosh T.C."/>
            <person name="Meister S."/>
            <person name="Miller J.R."/>
            <person name="Mobarry C."/>
            <person name="Mongin E."/>
            <person name="Murphy S.D."/>
            <person name="O'Brochta D.A."/>
            <person name="Pfannkoch C."/>
            <person name="Qi R."/>
            <person name="Regier M.A."/>
            <person name="Remington K."/>
            <person name="Shao H."/>
            <person name="Sharakhova M.V."/>
            <person name="Sitter C.D."/>
            <person name="Shetty J."/>
            <person name="Smith T.J."/>
            <person name="Strong R."/>
            <person name="Sun J."/>
            <person name="Thomasova D."/>
            <person name="Ton L.Q."/>
            <person name="Topalis P."/>
            <person name="Tu Z.J."/>
            <person name="Unger M.F."/>
            <person name="Walenz B."/>
            <person name="Wang A.H."/>
            <person name="Wang J."/>
            <person name="Wang M."/>
            <person name="Wang X."/>
            <person name="Woodford K.J."/>
            <person name="Wortman J.R."/>
            <person name="Wu M."/>
            <person name="Yao A."/>
            <person name="Zdobnov E.M."/>
            <person name="Zhang H."/>
            <person name="Zhao Q."/>
            <person name="Zhao S."/>
            <person name="Zhu S.C."/>
            <person name="Zhimulev I."/>
            <person name="Coluzzi M."/>
            <person name="della Torre A."/>
            <person name="Roth C.W."/>
            <person name="Louis C."/>
            <person name="Kalush F."/>
            <person name="Mural R.J."/>
            <person name="Myers E.W."/>
            <person name="Adams M.D."/>
            <person name="Smith H.O."/>
            <person name="Broder S."/>
            <person name="Gardner M.J."/>
            <person name="Fraser C.M."/>
            <person name="Birney E."/>
            <person name="Bork P."/>
            <person name="Brey P.T."/>
            <person name="Venter J.C."/>
            <person name="Weissenbach J."/>
            <person name="Kafatos F.C."/>
            <person name="Collins F.H."/>
            <person name="Hoffman S.L."/>
        </authorList>
    </citation>
    <scope>NUCLEOTIDE SEQUENCE [LARGE SCALE GENOMIC DNA]</scope>
    <source>
        <strain>PEST</strain>
    </source>
</reference>
<proteinExistence type="inferred from homology"/>
<keyword id="KW-0140">cGMP</keyword>
<keyword id="KW-0963">Cytoplasm</keyword>
<keyword id="KW-0539">Nucleus</keyword>
<keyword id="KW-1185">Reference proteome</keyword>
<dbReference type="EMBL" id="AAAB01008986">
    <property type="protein sequence ID" value="EAA00444.1"/>
    <property type="molecule type" value="Genomic_DNA"/>
</dbReference>
<dbReference type="SMR" id="Q7PZ66"/>
<dbReference type="FunCoup" id="Q7PZ66">
    <property type="interactions" value="1632"/>
</dbReference>
<dbReference type="STRING" id="7165.Q7PZ66"/>
<dbReference type="PaxDb" id="7165-AGAP011756-PA"/>
<dbReference type="EnsemblMetazoa" id="AGAP011756-RA">
    <property type="protein sequence ID" value="AGAP011756-PA"/>
    <property type="gene ID" value="AGAP011756"/>
</dbReference>
<dbReference type="GeneID" id="1280884"/>
<dbReference type="KEGG" id="aga:1280884"/>
<dbReference type="VEuPathDB" id="VectorBase:AGAMI1_005127"/>
<dbReference type="VEuPathDB" id="VectorBase:AGAP011756"/>
<dbReference type="eggNOG" id="KOG4038">
    <property type="taxonomic scope" value="Eukaryota"/>
</dbReference>
<dbReference type="HOGENOM" id="CLU_119682_0_0_1"/>
<dbReference type="InParanoid" id="Q7PZ66"/>
<dbReference type="OMA" id="STNTWQN"/>
<dbReference type="PhylomeDB" id="Q7PZ66"/>
<dbReference type="Proteomes" id="UP000007062">
    <property type="component" value="Chromosome 3L"/>
</dbReference>
<dbReference type="GO" id="GO:0005737">
    <property type="term" value="C:cytoplasm"/>
    <property type="evidence" value="ECO:0000250"/>
    <property type="project" value="UniProtKB"/>
</dbReference>
<dbReference type="GO" id="GO:0005634">
    <property type="term" value="C:nucleus"/>
    <property type="evidence" value="ECO:0000250"/>
    <property type="project" value="UniProtKB"/>
</dbReference>
<dbReference type="GO" id="GO:0050953">
    <property type="term" value="P:sensory perception of light stimulus"/>
    <property type="evidence" value="ECO:0007669"/>
    <property type="project" value="InterPro"/>
</dbReference>
<dbReference type="FunFam" id="2.70.50.40:FF:000002">
    <property type="entry name" value="Retinal rod rhodopsin-sensitive cGMP 3',5'-cyclic phosphodiesterase subunit delta"/>
    <property type="match status" value="1"/>
</dbReference>
<dbReference type="Gene3D" id="2.70.50.40">
    <property type="entry name" value="GMP phosphodiesterase, delta subunit"/>
    <property type="match status" value="1"/>
</dbReference>
<dbReference type="InterPro" id="IPR014756">
    <property type="entry name" value="Ig_E-set"/>
</dbReference>
<dbReference type="InterPro" id="IPR008015">
    <property type="entry name" value="PDED_dom"/>
</dbReference>
<dbReference type="InterPro" id="IPR037036">
    <property type="entry name" value="PDED_dom_sf"/>
</dbReference>
<dbReference type="InterPro" id="IPR017287">
    <property type="entry name" value="Rhodop-sen_GMP-Pdiesterase_dsu"/>
</dbReference>
<dbReference type="PANTHER" id="PTHR12976">
    <property type="entry name" value="RETINAL ROD RHODOPSIN-SENSITIVE CGMP 3',5'-CYCLIC PHOSPHODIESTERASE DELTA-SUBUNIT"/>
    <property type="match status" value="1"/>
</dbReference>
<dbReference type="PANTHER" id="PTHR12976:SF0">
    <property type="entry name" value="RETINAL ROD RHODOPSIN-SENSITIVE CGMP 3',5'-CYCLIC PHOSPHODIESTERASE SUBUNIT DELTA"/>
    <property type="match status" value="1"/>
</dbReference>
<dbReference type="Pfam" id="PF05351">
    <property type="entry name" value="GMP_PDE_delta"/>
    <property type="match status" value="1"/>
</dbReference>
<dbReference type="PIRSF" id="PIRSF037825">
    <property type="entry name" value="GMP-Pdiesterase_delta"/>
    <property type="match status" value="1"/>
</dbReference>
<dbReference type="SUPFAM" id="SSF81296">
    <property type="entry name" value="E set domains"/>
    <property type="match status" value="1"/>
</dbReference>
<sequence length="151" mass="17334">MGTDDLGKGEKILNGFQINWMILRDADTGKIIWQENKDFSCPDVEHEAKVPVKILSLRAVSREINFSTVEAMENFRLDQKVLFKGRIMEEWFFEMGWVSPNTTNTWQSTIEAAPESQMMPAKVLNGNVTIETSFYDGDTLISKSVVRLYYI</sequence>
<accession>Q7PZ66</accession>
<gene>
    <name evidence="1" type="primary">PrBP</name>
    <name type="ORF">AGAP011756</name>
</gene>
<feature type="chain" id="PRO_0000363671" description="Probable cGMP 3',5'-cyclic phosphodiesterase subunit delta">
    <location>
        <begin position="1"/>
        <end position="151"/>
    </location>
</feature>
<name>PDE6D_ANOGA</name>
<organism>
    <name type="scientific">Anopheles gambiae</name>
    <name type="common">African malaria mosquito</name>
    <dbReference type="NCBI Taxonomy" id="7165"/>
    <lineage>
        <taxon>Eukaryota</taxon>
        <taxon>Metazoa</taxon>
        <taxon>Ecdysozoa</taxon>
        <taxon>Arthropoda</taxon>
        <taxon>Hexapoda</taxon>
        <taxon>Insecta</taxon>
        <taxon>Pterygota</taxon>
        <taxon>Neoptera</taxon>
        <taxon>Endopterygota</taxon>
        <taxon>Diptera</taxon>
        <taxon>Nematocera</taxon>
        <taxon>Culicoidea</taxon>
        <taxon>Culicidae</taxon>
        <taxon>Anophelinae</taxon>
        <taxon>Anopheles</taxon>
    </lineage>
</organism>
<evidence type="ECO:0000250" key="1">
    <source>
        <dbReference type="UniProtKB" id="Q9VLJ0"/>
    </source>
</evidence>
<evidence type="ECO:0000255" key="2"/>
<evidence type="ECO:0000312" key="3">
    <source>
        <dbReference type="EMBL" id="EAA00444.1"/>
    </source>
</evidence>